<evidence type="ECO:0000255" key="1">
    <source>
        <dbReference type="HAMAP-Rule" id="MF_00360"/>
    </source>
</evidence>
<evidence type="ECO:0000256" key="2">
    <source>
        <dbReference type="SAM" id="MobiDB-lite"/>
    </source>
</evidence>
<evidence type="ECO:0000305" key="3"/>
<protein>
    <recommendedName>
        <fullName evidence="1">Small ribosomal subunit protein bS6</fullName>
    </recommendedName>
    <alternativeName>
        <fullName evidence="3">30S ribosomal protein S6</fullName>
    </alternativeName>
</protein>
<accession>Q4A5N1</accession>
<gene>
    <name evidence="1" type="primary">rpsF</name>
    <name type="ordered locus">MS53_0532</name>
</gene>
<name>RS6_MYCS5</name>
<sequence>MVLVGPKTSASTVESFLKSVFHDDFKKAEKLERTELAYEINKTKHAQYFLVNLETERKNIAEFIRLSNINKEIWRHLVVNLDTEKGLNKVFKTHRKFGHDFRDQRSHHGQAGEFRKREPQQKSKEQSEFSKEKKSFSKSVTKKTVVSKPKETKEEK</sequence>
<proteinExistence type="inferred from homology"/>
<reference key="1">
    <citation type="journal article" date="2005" name="J. Bacteriol.">
        <title>Swine and poultry pathogens: the complete genome sequences of two strains of Mycoplasma hyopneumoniae and a strain of Mycoplasma synoviae.</title>
        <authorList>
            <person name="Vasconcelos A.T.R."/>
            <person name="Ferreira H.B."/>
            <person name="Bizarro C.V."/>
            <person name="Bonatto S.L."/>
            <person name="Carvalho M.O."/>
            <person name="Pinto P.M."/>
            <person name="Almeida D.F."/>
            <person name="Almeida L.G.P."/>
            <person name="Almeida R."/>
            <person name="Alves-Junior L."/>
            <person name="Assuncao E.N."/>
            <person name="Azevedo V.A.C."/>
            <person name="Bogo M.R."/>
            <person name="Brigido M.M."/>
            <person name="Brocchi M."/>
            <person name="Burity H.A."/>
            <person name="Camargo A.A."/>
            <person name="Camargo S.S."/>
            <person name="Carepo M.S."/>
            <person name="Carraro D.M."/>
            <person name="de Mattos Cascardo J.C."/>
            <person name="Castro L.A."/>
            <person name="Cavalcanti G."/>
            <person name="Chemale G."/>
            <person name="Collevatti R.G."/>
            <person name="Cunha C.W."/>
            <person name="Dallagiovanna B."/>
            <person name="Dambros B.P."/>
            <person name="Dellagostin O.A."/>
            <person name="Falcao C."/>
            <person name="Fantinatti-Garboggini F."/>
            <person name="Felipe M.S.S."/>
            <person name="Fiorentin L."/>
            <person name="Franco G.R."/>
            <person name="Freitas N.S.A."/>
            <person name="Frias D."/>
            <person name="Grangeiro T.B."/>
            <person name="Grisard E.C."/>
            <person name="Guimaraes C.T."/>
            <person name="Hungria M."/>
            <person name="Jardim S.N."/>
            <person name="Krieger M.A."/>
            <person name="Laurino J.P."/>
            <person name="Lima L.F.A."/>
            <person name="Lopes M.I."/>
            <person name="Loreto E.L.S."/>
            <person name="Madeira H.M.F."/>
            <person name="Manfio G.P."/>
            <person name="Maranhao A.Q."/>
            <person name="Martinkovics C.T."/>
            <person name="Medeiros S.R.B."/>
            <person name="Moreira M.A.M."/>
            <person name="Neiva M."/>
            <person name="Ramalho-Neto C.E."/>
            <person name="Nicolas M.F."/>
            <person name="Oliveira S.C."/>
            <person name="Paixao R.F.C."/>
            <person name="Pedrosa F.O."/>
            <person name="Pena S.D.J."/>
            <person name="Pereira M."/>
            <person name="Pereira-Ferrari L."/>
            <person name="Piffer I."/>
            <person name="Pinto L.S."/>
            <person name="Potrich D.P."/>
            <person name="Salim A.C.M."/>
            <person name="Santos F.R."/>
            <person name="Schmitt R."/>
            <person name="Schneider M.P.C."/>
            <person name="Schrank A."/>
            <person name="Schrank I.S."/>
            <person name="Schuck A.F."/>
            <person name="Seuanez H.N."/>
            <person name="Silva D.W."/>
            <person name="Silva R."/>
            <person name="Silva S.C."/>
            <person name="Soares C.M.A."/>
            <person name="Souza K.R.L."/>
            <person name="Souza R.C."/>
            <person name="Staats C.C."/>
            <person name="Steffens M.B.R."/>
            <person name="Teixeira S.M.R."/>
            <person name="Urmenyi T.P."/>
            <person name="Vainstein M.H."/>
            <person name="Zuccherato L.W."/>
            <person name="Simpson A.J.G."/>
            <person name="Zaha A."/>
        </authorList>
    </citation>
    <scope>NUCLEOTIDE SEQUENCE [LARGE SCALE GENOMIC DNA]</scope>
    <source>
        <strain>53</strain>
    </source>
</reference>
<keyword id="KW-1185">Reference proteome</keyword>
<keyword id="KW-0687">Ribonucleoprotein</keyword>
<keyword id="KW-0689">Ribosomal protein</keyword>
<keyword id="KW-0694">RNA-binding</keyword>
<keyword id="KW-0699">rRNA-binding</keyword>
<organism>
    <name type="scientific">Mycoplasmopsis synoviae (strain 53)</name>
    <name type="common">Mycoplasma synoviae</name>
    <dbReference type="NCBI Taxonomy" id="262723"/>
    <lineage>
        <taxon>Bacteria</taxon>
        <taxon>Bacillati</taxon>
        <taxon>Mycoplasmatota</taxon>
        <taxon>Mycoplasmoidales</taxon>
        <taxon>Metamycoplasmataceae</taxon>
        <taxon>Mycoplasmopsis</taxon>
    </lineage>
</organism>
<feature type="chain" id="PRO_0000229554" description="Small ribosomal subunit protein bS6">
    <location>
        <begin position="1"/>
        <end position="156"/>
    </location>
</feature>
<feature type="region of interest" description="Disordered" evidence="2">
    <location>
        <begin position="98"/>
        <end position="156"/>
    </location>
</feature>
<feature type="compositionally biased region" description="Basic and acidic residues" evidence="2">
    <location>
        <begin position="113"/>
        <end position="135"/>
    </location>
</feature>
<feature type="compositionally biased region" description="Low complexity" evidence="2">
    <location>
        <begin position="137"/>
        <end position="147"/>
    </location>
</feature>
<dbReference type="EMBL" id="AE017245">
    <property type="protein sequence ID" value="AAZ43940.2"/>
    <property type="molecule type" value="Genomic_DNA"/>
</dbReference>
<dbReference type="RefSeq" id="WP_041352065.1">
    <property type="nucleotide sequence ID" value="NC_007294.1"/>
</dbReference>
<dbReference type="SMR" id="Q4A5N1"/>
<dbReference type="STRING" id="262723.MS53_0532"/>
<dbReference type="KEGG" id="msy:MS53_0532"/>
<dbReference type="eggNOG" id="COG0360">
    <property type="taxonomic scope" value="Bacteria"/>
</dbReference>
<dbReference type="HOGENOM" id="CLU_137913_0_0_14"/>
<dbReference type="OrthoDB" id="9812702at2"/>
<dbReference type="Proteomes" id="UP000000549">
    <property type="component" value="Chromosome"/>
</dbReference>
<dbReference type="GO" id="GO:1990904">
    <property type="term" value="C:ribonucleoprotein complex"/>
    <property type="evidence" value="ECO:0007669"/>
    <property type="project" value="UniProtKB-KW"/>
</dbReference>
<dbReference type="GO" id="GO:0005840">
    <property type="term" value="C:ribosome"/>
    <property type="evidence" value="ECO:0007669"/>
    <property type="project" value="UniProtKB-KW"/>
</dbReference>
<dbReference type="GO" id="GO:0019843">
    <property type="term" value="F:rRNA binding"/>
    <property type="evidence" value="ECO:0007669"/>
    <property type="project" value="UniProtKB-UniRule"/>
</dbReference>
<dbReference type="GO" id="GO:0003735">
    <property type="term" value="F:structural constituent of ribosome"/>
    <property type="evidence" value="ECO:0007669"/>
    <property type="project" value="InterPro"/>
</dbReference>
<dbReference type="GO" id="GO:0006412">
    <property type="term" value="P:translation"/>
    <property type="evidence" value="ECO:0007669"/>
    <property type="project" value="UniProtKB-UniRule"/>
</dbReference>
<dbReference type="CDD" id="cd00473">
    <property type="entry name" value="bS6"/>
    <property type="match status" value="1"/>
</dbReference>
<dbReference type="Gene3D" id="3.30.70.60">
    <property type="match status" value="1"/>
</dbReference>
<dbReference type="HAMAP" id="MF_00360">
    <property type="entry name" value="Ribosomal_bS6"/>
    <property type="match status" value="1"/>
</dbReference>
<dbReference type="InterPro" id="IPR000529">
    <property type="entry name" value="Ribosomal_bS6"/>
</dbReference>
<dbReference type="InterPro" id="IPR035980">
    <property type="entry name" value="Ribosomal_bS6_sf"/>
</dbReference>
<dbReference type="InterPro" id="IPR020814">
    <property type="entry name" value="Ribosomal_S6_plastid/chlpt"/>
</dbReference>
<dbReference type="InterPro" id="IPR014717">
    <property type="entry name" value="Transl_elong_EF1B/ribsomal_bS6"/>
</dbReference>
<dbReference type="NCBIfam" id="TIGR00166">
    <property type="entry name" value="S6"/>
    <property type="match status" value="1"/>
</dbReference>
<dbReference type="Pfam" id="PF01250">
    <property type="entry name" value="Ribosomal_S6"/>
    <property type="match status" value="1"/>
</dbReference>
<dbReference type="SUPFAM" id="SSF54995">
    <property type="entry name" value="Ribosomal protein S6"/>
    <property type="match status" value="1"/>
</dbReference>
<comment type="function">
    <text evidence="1">Binds together with bS18 to 16S ribosomal RNA.</text>
</comment>
<comment type="similarity">
    <text evidence="1">Belongs to the bacterial ribosomal protein bS6 family.</text>
</comment>